<proteinExistence type="inferred from homology"/>
<gene>
    <name evidence="1" type="primary">lpxK</name>
    <name type="ordered locus">Patl_1781</name>
</gene>
<feature type="chain" id="PRO_0000291224" description="Tetraacyldisaccharide 4'-kinase">
    <location>
        <begin position="1"/>
        <end position="305"/>
    </location>
</feature>
<feature type="binding site" evidence="1">
    <location>
        <begin position="39"/>
        <end position="46"/>
    </location>
    <ligand>
        <name>ATP</name>
        <dbReference type="ChEBI" id="CHEBI:30616"/>
    </ligand>
</feature>
<organism>
    <name type="scientific">Pseudoalteromonas atlantica (strain T6c / ATCC BAA-1087)</name>
    <dbReference type="NCBI Taxonomy" id="3042615"/>
    <lineage>
        <taxon>Bacteria</taxon>
        <taxon>Pseudomonadati</taxon>
        <taxon>Pseudomonadota</taxon>
        <taxon>Gammaproteobacteria</taxon>
        <taxon>Alteromonadales</taxon>
        <taxon>Alteromonadaceae</taxon>
        <taxon>Paraglaciecola</taxon>
    </lineage>
</organism>
<accession>Q15UY6</accession>
<keyword id="KW-0067">ATP-binding</keyword>
<keyword id="KW-0418">Kinase</keyword>
<keyword id="KW-0441">Lipid A biosynthesis</keyword>
<keyword id="KW-0444">Lipid biosynthesis</keyword>
<keyword id="KW-0443">Lipid metabolism</keyword>
<keyword id="KW-0547">Nucleotide-binding</keyword>
<keyword id="KW-0808">Transferase</keyword>
<evidence type="ECO:0000255" key="1">
    <source>
        <dbReference type="HAMAP-Rule" id="MF_00409"/>
    </source>
</evidence>
<comment type="function">
    <text evidence="1">Transfers the gamma-phosphate of ATP to the 4'-position of a tetraacyldisaccharide 1-phosphate intermediate (termed DS-1-P) to form tetraacyldisaccharide 1,4'-bis-phosphate (lipid IVA).</text>
</comment>
<comment type="catalytic activity">
    <reaction evidence="1">
        <text>a lipid A disaccharide + ATP = a lipid IVA + ADP + H(+)</text>
        <dbReference type="Rhea" id="RHEA:67840"/>
        <dbReference type="ChEBI" id="CHEBI:15378"/>
        <dbReference type="ChEBI" id="CHEBI:30616"/>
        <dbReference type="ChEBI" id="CHEBI:176343"/>
        <dbReference type="ChEBI" id="CHEBI:176425"/>
        <dbReference type="ChEBI" id="CHEBI:456216"/>
        <dbReference type="EC" id="2.7.1.130"/>
    </reaction>
</comment>
<comment type="pathway">
    <text evidence="1">Glycolipid biosynthesis; lipid IV(A) biosynthesis; lipid IV(A) from (3R)-3-hydroxytetradecanoyl-[acyl-carrier-protein] and UDP-N-acetyl-alpha-D-glucosamine: step 6/6.</text>
</comment>
<comment type="similarity">
    <text evidence="1">Belongs to the LpxK family.</text>
</comment>
<sequence length="305" mass="34031">MPLTVLFWLISKARRWAFLTGLKSSVKVSAPVIIVGNISVGGNGKTPLVVHLAQFLQANGYRPGVLSRGYGGNSRDYPCAVTRNSQPSEVGDEPVLMRQRIHCPMVVDPHRGRGAQCLVEEHDCDVIICDDGLQHYALQRDIEIVVMDAKRRTGNHFLLPSGPLRESTARLGQVDFVVVNGQNTQSGEWLMSLAPSELVNLNNPTLHLALSELDAPVIAAAGIGHPERFYKLLERHKVKLKSCLSFVDHHAFQASDLPKERVLMTEKDAVKCRAFAHDDWWYLPVDANLDSEFEQQLLMKLRNVK</sequence>
<reference key="1">
    <citation type="submission" date="2006-06" db="EMBL/GenBank/DDBJ databases">
        <title>Complete sequence of Pseudoalteromonas atlantica T6c.</title>
        <authorList>
            <consortium name="US DOE Joint Genome Institute"/>
            <person name="Copeland A."/>
            <person name="Lucas S."/>
            <person name="Lapidus A."/>
            <person name="Barry K."/>
            <person name="Detter J.C."/>
            <person name="Glavina del Rio T."/>
            <person name="Hammon N."/>
            <person name="Israni S."/>
            <person name="Dalin E."/>
            <person name="Tice H."/>
            <person name="Pitluck S."/>
            <person name="Saunders E."/>
            <person name="Brettin T."/>
            <person name="Bruce D."/>
            <person name="Han C."/>
            <person name="Tapia R."/>
            <person name="Gilna P."/>
            <person name="Schmutz J."/>
            <person name="Larimer F."/>
            <person name="Land M."/>
            <person name="Hauser L."/>
            <person name="Kyrpides N."/>
            <person name="Kim E."/>
            <person name="Karls A.C."/>
            <person name="Bartlett D."/>
            <person name="Higgins B.P."/>
            <person name="Richardson P."/>
        </authorList>
    </citation>
    <scope>NUCLEOTIDE SEQUENCE [LARGE SCALE GENOMIC DNA]</scope>
    <source>
        <strain>T6c / ATCC BAA-1087</strain>
    </source>
</reference>
<name>LPXK_PSEA6</name>
<protein>
    <recommendedName>
        <fullName evidence="1">Tetraacyldisaccharide 4'-kinase</fullName>
        <ecNumber evidence="1">2.7.1.130</ecNumber>
    </recommendedName>
    <alternativeName>
        <fullName evidence="1">Lipid A 4'-kinase</fullName>
    </alternativeName>
</protein>
<dbReference type="EC" id="2.7.1.130" evidence="1"/>
<dbReference type="EMBL" id="CP000388">
    <property type="protein sequence ID" value="ABG40302.1"/>
    <property type="molecule type" value="Genomic_DNA"/>
</dbReference>
<dbReference type="SMR" id="Q15UY6"/>
<dbReference type="STRING" id="342610.Patl_1781"/>
<dbReference type="KEGG" id="pat:Patl_1781"/>
<dbReference type="eggNOG" id="COG1663">
    <property type="taxonomic scope" value="Bacteria"/>
</dbReference>
<dbReference type="HOGENOM" id="CLU_038816_2_0_6"/>
<dbReference type="UniPathway" id="UPA00359">
    <property type="reaction ID" value="UER00482"/>
</dbReference>
<dbReference type="Proteomes" id="UP000001981">
    <property type="component" value="Chromosome"/>
</dbReference>
<dbReference type="GO" id="GO:0005886">
    <property type="term" value="C:plasma membrane"/>
    <property type="evidence" value="ECO:0007669"/>
    <property type="project" value="TreeGrafter"/>
</dbReference>
<dbReference type="GO" id="GO:0005524">
    <property type="term" value="F:ATP binding"/>
    <property type="evidence" value="ECO:0007669"/>
    <property type="project" value="UniProtKB-UniRule"/>
</dbReference>
<dbReference type="GO" id="GO:0009029">
    <property type="term" value="F:tetraacyldisaccharide 4'-kinase activity"/>
    <property type="evidence" value="ECO:0007669"/>
    <property type="project" value="UniProtKB-UniRule"/>
</dbReference>
<dbReference type="GO" id="GO:0009245">
    <property type="term" value="P:lipid A biosynthetic process"/>
    <property type="evidence" value="ECO:0007669"/>
    <property type="project" value="UniProtKB-UniRule"/>
</dbReference>
<dbReference type="GO" id="GO:0009244">
    <property type="term" value="P:lipopolysaccharide core region biosynthetic process"/>
    <property type="evidence" value="ECO:0007669"/>
    <property type="project" value="TreeGrafter"/>
</dbReference>
<dbReference type="HAMAP" id="MF_00409">
    <property type="entry name" value="LpxK"/>
    <property type="match status" value="1"/>
</dbReference>
<dbReference type="InterPro" id="IPR003758">
    <property type="entry name" value="LpxK"/>
</dbReference>
<dbReference type="InterPro" id="IPR027417">
    <property type="entry name" value="P-loop_NTPase"/>
</dbReference>
<dbReference type="NCBIfam" id="TIGR00682">
    <property type="entry name" value="lpxK"/>
    <property type="match status" value="1"/>
</dbReference>
<dbReference type="PANTHER" id="PTHR42724">
    <property type="entry name" value="TETRAACYLDISACCHARIDE 4'-KINASE"/>
    <property type="match status" value="1"/>
</dbReference>
<dbReference type="PANTHER" id="PTHR42724:SF1">
    <property type="entry name" value="TETRAACYLDISACCHARIDE 4'-KINASE, MITOCHONDRIAL-RELATED"/>
    <property type="match status" value="1"/>
</dbReference>
<dbReference type="Pfam" id="PF02606">
    <property type="entry name" value="LpxK"/>
    <property type="match status" value="1"/>
</dbReference>
<dbReference type="SUPFAM" id="SSF52540">
    <property type="entry name" value="P-loop containing nucleoside triphosphate hydrolases"/>
    <property type="match status" value="1"/>
</dbReference>